<organismHost>
    <name type="scientific">Homo sapiens</name>
    <name type="common">Human</name>
    <dbReference type="NCBI Taxonomy" id="9606"/>
</organismHost>
<reference key="1">
    <citation type="journal article" date="1995" name="Virology">
        <title>Sequence determination of human papillomavirus type 6a and assembly of virus-like particles in Saccharomyces cerevisiae.</title>
        <authorList>
            <person name="Hofmann K.J."/>
            <person name="Cook J.C."/>
            <person name="Joyce J.G."/>
            <person name="Brown D.R."/>
            <person name="Schultz L.D."/>
            <person name="George H.A."/>
            <person name="Rosolowsky M."/>
            <person name="Fife K.H."/>
            <person name="Jansen K.U."/>
        </authorList>
    </citation>
    <scope>NUCLEOTIDE SEQUENCE [GENOMIC DNA]</scope>
</reference>
<feature type="chain" id="PRO_0000133184" description="Regulatory protein E2">
    <location>
        <begin position="1"/>
        <end position="368"/>
    </location>
</feature>
<feature type="region of interest" description="Transactivation domain" evidence="1">
    <location>
        <begin position="1"/>
        <end position="200"/>
    </location>
</feature>
<feature type="region of interest" description="Disordered" evidence="2">
    <location>
        <begin position="205"/>
        <end position="240"/>
    </location>
</feature>
<feature type="region of interest" description="DNA-binding domain" evidence="1">
    <location>
        <begin position="284"/>
        <end position="368"/>
    </location>
</feature>
<feature type="compositionally biased region" description="Polar residues" evidence="2">
    <location>
        <begin position="205"/>
        <end position="231"/>
    </location>
</feature>
<feature type="strand" evidence="3">
    <location>
        <begin position="284"/>
        <end position="292"/>
    </location>
</feature>
<feature type="helix" evidence="3">
    <location>
        <begin position="294"/>
        <end position="307"/>
    </location>
</feature>
<feature type="helix" evidence="3">
    <location>
        <begin position="309"/>
        <end position="311"/>
    </location>
</feature>
<feature type="turn" evidence="4">
    <location>
        <begin position="323"/>
        <end position="325"/>
    </location>
</feature>
<feature type="strand" evidence="3">
    <location>
        <begin position="331"/>
        <end position="336"/>
    </location>
</feature>
<feature type="helix" evidence="3">
    <location>
        <begin position="340"/>
        <end position="349"/>
    </location>
</feature>
<feature type="strand" evidence="3">
    <location>
        <begin position="357"/>
        <end position="364"/>
    </location>
</feature>
<feature type="helix" evidence="3">
    <location>
        <begin position="365"/>
        <end position="367"/>
    </location>
</feature>
<evidence type="ECO:0000255" key="1">
    <source>
        <dbReference type="HAMAP-Rule" id="MF_04001"/>
    </source>
</evidence>
<evidence type="ECO:0000256" key="2">
    <source>
        <dbReference type="SAM" id="MobiDB-lite"/>
    </source>
</evidence>
<evidence type="ECO:0007829" key="3">
    <source>
        <dbReference type="PDB" id="1R8H"/>
    </source>
</evidence>
<evidence type="ECO:0007829" key="4">
    <source>
        <dbReference type="PDB" id="2AYE"/>
    </source>
</evidence>
<keyword id="KW-0002">3D-structure</keyword>
<keyword id="KW-0010">Activator</keyword>
<keyword id="KW-0235">DNA replication</keyword>
<keyword id="KW-0238">DNA-binding</keyword>
<keyword id="KW-0244">Early protein</keyword>
<keyword id="KW-1048">Host nucleus</keyword>
<keyword id="KW-0597">Phosphoprotein</keyword>
<keyword id="KW-0678">Repressor</keyword>
<keyword id="KW-0804">Transcription</keyword>
<keyword id="KW-0805">Transcription regulation</keyword>
<gene>
    <name evidence="1" type="primary">E2</name>
</gene>
<organism>
    <name type="scientific">Human papillomavirus type 6a</name>
    <dbReference type="NCBI Taxonomy" id="37122"/>
    <lineage>
        <taxon>Viruses</taxon>
        <taxon>Monodnaviria</taxon>
        <taxon>Shotokuvirae</taxon>
        <taxon>Cossaviricota</taxon>
        <taxon>Papovaviricetes</taxon>
        <taxon>Zurhausenvirales</taxon>
        <taxon>Papillomaviridae</taxon>
        <taxon>Firstpapillomavirinae</taxon>
        <taxon>Alphapapillomavirus</taxon>
        <taxon>Alphapapillomavirus 10</taxon>
    </lineage>
</organism>
<dbReference type="EMBL" id="L41216">
    <property type="protein sequence ID" value="AAA74214.1"/>
    <property type="molecule type" value="Genomic_DNA"/>
</dbReference>
<dbReference type="PDB" id="1R8H">
    <property type="method" value="X-ray"/>
    <property type="resolution" value="1.90 A"/>
    <property type="chains" value="A/B/C/D/E/F=282-368"/>
</dbReference>
<dbReference type="PDB" id="2AYB">
    <property type="method" value="X-ray"/>
    <property type="resolution" value="3.20 A"/>
    <property type="chains" value="A/B=282-368"/>
</dbReference>
<dbReference type="PDB" id="2AYE">
    <property type="method" value="X-ray"/>
    <property type="resolution" value="2.30 A"/>
    <property type="chains" value="A/B/C/D/E/F=282-368"/>
</dbReference>
<dbReference type="PDB" id="2AYG">
    <property type="method" value="X-ray"/>
    <property type="resolution" value="3.10 A"/>
    <property type="chains" value="A/B=282-368"/>
</dbReference>
<dbReference type="PDBsum" id="1R8H"/>
<dbReference type="PDBsum" id="2AYB"/>
<dbReference type="PDBsum" id="2AYE"/>
<dbReference type="PDBsum" id="2AYG"/>
<dbReference type="SMR" id="Q84294"/>
<dbReference type="EvolutionaryTrace" id="Q84294"/>
<dbReference type="Proteomes" id="UP000007675">
    <property type="component" value="Genome"/>
</dbReference>
<dbReference type="GO" id="GO:0042025">
    <property type="term" value="C:host cell nucleus"/>
    <property type="evidence" value="ECO:0007669"/>
    <property type="project" value="UniProtKB-SubCell"/>
</dbReference>
<dbReference type="GO" id="GO:0003677">
    <property type="term" value="F:DNA binding"/>
    <property type="evidence" value="ECO:0007669"/>
    <property type="project" value="UniProtKB-UniRule"/>
</dbReference>
<dbReference type="GO" id="GO:0003700">
    <property type="term" value="F:DNA-binding transcription factor activity"/>
    <property type="evidence" value="ECO:0007669"/>
    <property type="project" value="UniProtKB-UniRule"/>
</dbReference>
<dbReference type="GO" id="GO:0000166">
    <property type="term" value="F:nucleotide binding"/>
    <property type="evidence" value="ECO:0007669"/>
    <property type="project" value="UniProtKB-UniRule"/>
</dbReference>
<dbReference type="GO" id="GO:0006260">
    <property type="term" value="P:DNA replication"/>
    <property type="evidence" value="ECO:0007669"/>
    <property type="project" value="UniProtKB-KW"/>
</dbReference>
<dbReference type="GO" id="GO:0006351">
    <property type="term" value="P:DNA-templated transcription"/>
    <property type="evidence" value="ECO:0007669"/>
    <property type="project" value="UniProtKB-UniRule"/>
</dbReference>
<dbReference type="GO" id="GO:0006275">
    <property type="term" value="P:regulation of DNA replication"/>
    <property type="evidence" value="ECO:0007669"/>
    <property type="project" value="UniProtKB-UniRule"/>
</dbReference>
<dbReference type="GO" id="GO:0039693">
    <property type="term" value="P:viral DNA genome replication"/>
    <property type="evidence" value="ECO:0007669"/>
    <property type="project" value="UniProtKB-UniRule"/>
</dbReference>
<dbReference type="FunFam" id="3.30.70.330:FF:000918">
    <property type="entry name" value="Regulatory protein E2"/>
    <property type="match status" value="1"/>
</dbReference>
<dbReference type="Gene3D" id="3.30.70.330">
    <property type="match status" value="1"/>
</dbReference>
<dbReference type="Gene3D" id="1.10.287.30">
    <property type="entry name" value="E2 (early) protein, N terminal domain, subdomain 1"/>
    <property type="match status" value="1"/>
</dbReference>
<dbReference type="Gene3D" id="2.170.200.10">
    <property type="entry name" value="Papillomavirus E2 early protein domain"/>
    <property type="match status" value="1"/>
</dbReference>
<dbReference type="HAMAP" id="MF_04001">
    <property type="entry name" value="PPV_E2"/>
    <property type="match status" value="1"/>
</dbReference>
<dbReference type="InterPro" id="IPR035975">
    <property type="entry name" value="E2/EBNA1_C_sf"/>
</dbReference>
<dbReference type="InterPro" id="IPR012677">
    <property type="entry name" value="Nucleotide-bd_a/b_plait_sf"/>
</dbReference>
<dbReference type="InterPro" id="IPR000427">
    <property type="entry name" value="Papillomavirus_E2_C"/>
</dbReference>
<dbReference type="InterPro" id="IPR001866">
    <property type="entry name" value="PPV_E2_N"/>
</dbReference>
<dbReference type="InterPro" id="IPR033668">
    <property type="entry name" value="Reg_prot_E2"/>
</dbReference>
<dbReference type="InterPro" id="IPR036050">
    <property type="entry name" value="Regulatory_protein_E2_N"/>
</dbReference>
<dbReference type="InterPro" id="IPR042503">
    <property type="entry name" value="Regulatory_protein_E2_N_1"/>
</dbReference>
<dbReference type="InterPro" id="IPR042504">
    <property type="entry name" value="Regulatory_protein_E2_N_2"/>
</dbReference>
<dbReference type="Pfam" id="PF00511">
    <property type="entry name" value="PPV_E2_C"/>
    <property type="match status" value="1"/>
</dbReference>
<dbReference type="Pfam" id="PF00508">
    <property type="entry name" value="PPV_E2_N"/>
    <property type="match status" value="1"/>
</dbReference>
<dbReference type="SUPFAM" id="SSF51332">
    <property type="entry name" value="E2 regulatory, transactivation domain"/>
    <property type="match status" value="1"/>
</dbReference>
<dbReference type="SUPFAM" id="SSF54957">
    <property type="entry name" value="Viral DNA-binding domain"/>
    <property type="match status" value="1"/>
</dbReference>
<comment type="function">
    <text evidence="1">Plays a role in the initiation of viral DNA replication. A dimer of E2 interacts with a dimer of E1 in order to improve specificity of E1 DNA binding activity. Once the complex recognizes and binds DNA at specific sites, the E2 dimer is removed from DNA. E2 also regulates viral transcription through binding to the E2RE response element (5'-ACCNNNNNNGGT-3') present in multiple copies in the regulatory regions of the viral genome. Activates or represses transcription depending on E2RE's position with regards to proximal promoter elements including the TATA-box. Repression occurs by sterically hindering the assembly of the transcription initiation complex.</text>
</comment>
<comment type="subunit">
    <text evidence="1">Binds DNA as homodimer. Interacts with protein E1; this interaction greatly increases E1 DNA-binding activity. Interacts with protein L1; this interaction enhances E2-dependent replication and transcription activation. Interacts with protein L2; this interaction inhibits E2 transcriptional activity but not DNA replication function E2. Interacts with protein E7; this interaction inhibits E7 oncogenic activity. Interacts with host TAF1; this interaction modulates E2-dependent transcriptional regulation. Interacts with host BRD4; this interaction mediates E2 transcriptional activation function. Additionally, the interaction with host BRD4 on mitotic chromosomes mediates tethering of the viral genome. Interacts with host TOPBP1; this interaction is required for optimal viral DNA replication.</text>
</comment>
<comment type="subcellular location">
    <subcellularLocation>
        <location evidence="1">Host nucleus</location>
    </subcellularLocation>
</comment>
<comment type="PTM">
    <text evidence="1">Phosphorylated.</text>
</comment>
<comment type="similarity">
    <text evidence="1">Belongs to the papillomaviridae E2 protein family.</text>
</comment>
<proteinExistence type="evidence at protein level"/>
<sequence length="368" mass="42124">MEAIAKRLDACQEQLLELYEENSTDLNKHVLHWKCMRHESVLLYKAKQMGLSHIGMQVVPPLKVSEAKGHNAIEMQMHLESLLKTEYSMEPWTLQETSYEMWQTPPKRCFKKRGKTVEVKFDGCANNTMDYVVWTDVYVQDTDSWVKVHSMVDAKGIYYTCGQFKTYYVNFVKEAEKYGSTKQWEVCYGSTVICSPASVSSTTQEVSIPESTTYTPAQTSTPVSSSTQEDAVQTPPRKRARGVQQSPCNALCVAHIGPVDSGNHNLITNNHDQHQRRNNSNSSATPIVQFQGESNCLKCFRYRLNDKHRHLFDLISSTWHWASPKAPHKHAIVTVTYHSEEQRQQFLNVVKIPPTIRHKLGFMSLHLL</sequence>
<name>VE2_HPV6A</name>
<accession>Q84294</accession>
<protein>
    <recommendedName>
        <fullName evidence="1">Regulatory protein E2</fullName>
    </recommendedName>
</protein>